<comment type="function">
    <text evidence="1">Catalyzes the phosphorolysis of diverse nucleosides, yielding D-ribose 1-phosphate and the respective free bases. Can use uridine, adenosine, guanosine, cytidine, thymidine, inosine and xanthosine as substrates. Also catalyzes the reverse reactions.</text>
</comment>
<comment type="catalytic activity">
    <reaction evidence="1">
        <text>a purine D-ribonucleoside + phosphate = a purine nucleobase + alpha-D-ribose 1-phosphate</text>
        <dbReference type="Rhea" id="RHEA:19805"/>
        <dbReference type="ChEBI" id="CHEBI:26386"/>
        <dbReference type="ChEBI" id="CHEBI:43474"/>
        <dbReference type="ChEBI" id="CHEBI:57720"/>
        <dbReference type="ChEBI" id="CHEBI:142355"/>
        <dbReference type="EC" id="2.4.2.1"/>
    </reaction>
</comment>
<comment type="catalytic activity">
    <reaction evidence="1">
        <text>adenosine + phosphate = alpha-D-ribose 1-phosphate + adenine</text>
        <dbReference type="Rhea" id="RHEA:27642"/>
        <dbReference type="ChEBI" id="CHEBI:16335"/>
        <dbReference type="ChEBI" id="CHEBI:16708"/>
        <dbReference type="ChEBI" id="CHEBI:43474"/>
        <dbReference type="ChEBI" id="CHEBI:57720"/>
        <dbReference type="EC" id="2.4.2.1"/>
    </reaction>
</comment>
<comment type="catalytic activity">
    <reaction evidence="1">
        <text>cytidine + phosphate = cytosine + alpha-D-ribose 1-phosphate</text>
        <dbReference type="Rhea" id="RHEA:52540"/>
        <dbReference type="ChEBI" id="CHEBI:16040"/>
        <dbReference type="ChEBI" id="CHEBI:17562"/>
        <dbReference type="ChEBI" id="CHEBI:43474"/>
        <dbReference type="ChEBI" id="CHEBI:57720"/>
        <dbReference type="EC" id="2.4.2.2"/>
    </reaction>
</comment>
<comment type="catalytic activity">
    <reaction evidence="1">
        <text>guanosine + phosphate = alpha-D-ribose 1-phosphate + guanine</text>
        <dbReference type="Rhea" id="RHEA:13233"/>
        <dbReference type="ChEBI" id="CHEBI:16235"/>
        <dbReference type="ChEBI" id="CHEBI:16750"/>
        <dbReference type="ChEBI" id="CHEBI:43474"/>
        <dbReference type="ChEBI" id="CHEBI:57720"/>
        <dbReference type="EC" id="2.4.2.1"/>
    </reaction>
</comment>
<comment type="catalytic activity">
    <reaction evidence="1">
        <text>inosine + phosphate = alpha-D-ribose 1-phosphate + hypoxanthine</text>
        <dbReference type="Rhea" id="RHEA:27646"/>
        <dbReference type="ChEBI" id="CHEBI:17368"/>
        <dbReference type="ChEBI" id="CHEBI:17596"/>
        <dbReference type="ChEBI" id="CHEBI:43474"/>
        <dbReference type="ChEBI" id="CHEBI:57720"/>
        <dbReference type="EC" id="2.4.2.1"/>
    </reaction>
</comment>
<comment type="catalytic activity">
    <reaction evidence="1">
        <text>thymidine + phosphate = 2-deoxy-alpha-D-ribose 1-phosphate + thymine</text>
        <dbReference type="Rhea" id="RHEA:16037"/>
        <dbReference type="ChEBI" id="CHEBI:17748"/>
        <dbReference type="ChEBI" id="CHEBI:17821"/>
        <dbReference type="ChEBI" id="CHEBI:43474"/>
        <dbReference type="ChEBI" id="CHEBI:57259"/>
        <dbReference type="EC" id="2.4.2.2"/>
    </reaction>
</comment>
<comment type="catalytic activity">
    <reaction evidence="1">
        <text>uridine + phosphate = alpha-D-ribose 1-phosphate + uracil</text>
        <dbReference type="Rhea" id="RHEA:24388"/>
        <dbReference type="ChEBI" id="CHEBI:16704"/>
        <dbReference type="ChEBI" id="CHEBI:17568"/>
        <dbReference type="ChEBI" id="CHEBI:43474"/>
        <dbReference type="ChEBI" id="CHEBI:57720"/>
        <dbReference type="EC" id="2.4.2.2"/>
    </reaction>
</comment>
<comment type="catalytic activity">
    <reaction evidence="1">
        <text>xanthosine + phosphate = alpha-D-ribose 1-phosphate + xanthine</text>
        <dbReference type="Rhea" id="RHEA:27638"/>
        <dbReference type="ChEBI" id="CHEBI:17712"/>
        <dbReference type="ChEBI" id="CHEBI:18107"/>
        <dbReference type="ChEBI" id="CHEBI:43474"/>
        <dbReference type="ChEBI" id="CHEBI:57720"/>
        <dbReference type="EC" id="2.4.2.1"/>
    </reaction>
</comment>
<comment type="similarity">
    <text evidence="1">Belongs to the nucleoside phosphorylase PpnP family.</text>
</comment>
<accession>A9KX59</accession>
<gene>
    <name evidence="1" type="primary">ppnP</name>
    <name type="ordered locus">Sbal195_0273</name>
</gene>
<keyword id="KW-0328">Glycosyltransferase</keyword>
<keyword id="KW-0808">Transferase</keyword>
<dbReference type="EC" id="2.4.2.1" evidence="1"/>
<dbReference type="EC" id="2.4.2.2" evidence="1"/>
<dbReference type="EMBL" id="CP000891">
    <property type="protein sequence ID" value="ABX47455.1"/>
    <property type="molecule type" value="Genomic_DNA"/>
</dbReference>
<dbReference type="RefSeq" id="WP_006086532.1">
    <property type="nucleotide sequence ID" value="NC_009997.1"/>
</dbReference>
<dbReference type="SMR" id="A9KX59"/>
<dbReference type="KEGG" id="sbn:Sbal195_0273"/>
<dbReference type="HOGENOM" id="CLU_157874_1_0_6"/>
<dbReference type="Proteomes" id="UP000000770">
    <property type="component" value="Chromosome"/>
</dbReference>
<dbReference type="GO" id="GO:0005829">
    <property type="term" value="C:cytosol"/>
    <property type="evidence" value="ECO:0007669"/>
    <property type="project" value="TreeGrafter"/>
</dbReference>
<dbReference type="GO" id="GO:0047975">
    <property type="term" value="F:guanosine phosphorylase activity"/>
    <property type="evidence" value="ECO:0007669"/>
    <property type="project" value="UniProtKB-EC"/>
</dbReference>
<dbReference type="GO" id="GO:0004731">
    <property type="term" value="F:purine-nucleoside phosphorylase activity"/>
    <property type="evidence" value="ECO:0007669"/>
    <property type="project" value="UniProtKB-UniRule"/>
</dbReference>
<dbReference type="GO" id="GO:0009032">
    <property type="term" value="F:thymidine phosphorylase activity"/>
    <property type="evidence" value="ECO:0007669"/>
    <property type="project" value="UniProtKB-EC"/>
</dbReference>
<dbReference type="GO" id="GO:0004850">
    <property type="term" value="F:uridine phosphorylase activity"/>
    <property type="evidence" value="ECO:0007669"/>
    <property type="project" value="UniProtKB-EC"/>
</dbReference>
<dbReference type="CDD" id="cd20296">
    <property type="entry name" value="cupin_PpnP-like"/>
    <property type="match status" value="1"/>
</dbReference>
<dbReference type="FunFam" id="2.60.120.10:FF:000016">
    <property type="entry name" value="Pyrimidine/purine nucleoside phosphorylase"/>
    <property type="match status" value="1"/>
</dbReference>
<dbReference type="Gene3D" id="2.60.120.10">
    <property type="entry name" value="Jelly Rolls"/>
    <property type="match status" value="1"/>
</dbReference>
<dbReference type="HAMAP" id="MF_01537">
    <property type="entry name" value="Nucleos_phosphorylase_PpnP"/>
    <property type="match status" value="1"/>
</dbReference>
<dbReference type="InterPro" id="IPR009664">
    <property type="entry name" value="Ppnp"/>
</dbReference>
<dbReference type="InterPro" id="IPR014710">
    <property type="entry name" value="RmlC-like_jellyroll"/>
</dbReference>
<dbReference type="InterPro" id="IPR011051">
    <property type="entry name" value="RmlC_Cupin_sf"/>
</dbReference>
<dbReference type="PANTHER" id="PTHR36540">
    <property type="entry name" value="PYRIMIDINE/PURINE NUCLEOSIDE PHOSPHORYLASE"/>
    <property type="match status" value="1"/>
</dbReference>
<dbReference type="PANTHER" id="PTHR36540:SF1">
    <property type="entry name" value="PYRIMIDINE_PURINE NUCLEOSIDE PHOSPHORYLASE"/>
    <property type="match status" value="1"/>
</dbReference>
<dbReference type="Pfam" id="PF06865">
    <property type="entry name" value="Ppnp"/>
    <property type="match status" value="1"/>
</dbReference>
<dbReference type="SUPFAM" id="SSF51182">
    <property type="entry name" value="RmlC-like cupins"/>
    <property type="match status" value="1"/>
</dbReference>
<protein>
    <recommendedName>
        <fullName evidence="1">Pyrimidine/purine nucleoside phosphorylase</fullName>
        <ecNumber evidence="1">2.4.2.1</ecNumber>
        <ecNumber evidence="1">2.4.2.2</ecNumber>
    </recommendedName>
    <alternativeName>
        <fullName evidence="1">Adenosine phosphorylase</fullName>
    </alternativeName>
    <alternativeName>
        <fullName evidence="1">Cytidine phosphorylase</fullName>
    </alternativeName>
    <alternativeName>
        <fullName evidence="1">Guanosine phosphorylase</fullName>
    </alternativeName>
    <alternativeName>
        <fullName evidence="1">Inosine phosphorylase</fullName>
    </alternativeName>
    <alternativeName>
        <fullName evidence="1">Thymidine phosphorylase</fullName>
    </alternativeName>
    <alternativeName>
        <fullName evidence="1">Uridine phosphorylase</fullName>
    </alternativeName>
    <alternativeName>
        <fullName evidence="1">Xanthosine phosphorylase</fullName>
    </alternativeName>
</protein>
<feature type="chain" id="PRO_1000087613" description="Pyrimidine/purine nucleoside phosphorylase">
    <location>
        <begin position="1"/>
        <end position="103"/>
    </location>
</feature>
<sequence length="103" mass="11468">MSLLEQVSVSKKANIYFDGKVASRSVFFADGSKQTLGVVQPGEYEFSTSQGEIMEVISGRFEVLLPETTTWQEFSEGTQFELAANVSFKIRNTAIAEYCCSYL</sequence>
<proteinExistence type="inferred from homology"/>
<organism>
    <name type="scientific">Shewanella baltica (strain OS195)</name>
    <dbReference type="NCBI Taxonomy" id="399599"/>
    <lineage>
        <taxon>Bacteria</taxon>
        <taxon>Pseudomonadati</taxon>
        <taxon>Pseudomonadota</taxon>
        <taxon>Gammaproteobacteria</taxon>
        <taxon>Alteromonadales</taxon>
        <taxon>Shewanellaceae</taxon>
        <taxon>Shewanella</taxon>
    </lineage>
</organism>
<evidence type="ECO:0000255" key="1">
    <source>
        <dbReference type="HAMAP-Rule" id="MF_01537"/>
    </source>
</evidence>
<name>PPNP_SHEB9</name>
<reference key="1">
    <citation type="submission" date="2007-11" db="EMBL/GenBank/DDBJ databases">
        <title>Complete sequence of chromosome of Shewanella baltica OS195.</title>
        <authorList>
            <consortium name="US DOE Joint Genome Institute"/>
            <person name="Copeland A."/>
            <person name="Lucas S."/>
            <person name="Lapidus A."/>
            <person name="Barry K."/>
            <person name="Glavina del Rio T."/>
            <person name="Dalin E."/>
            <person name="Tice H."/>
            <person name="Pitluck S."/>
            <person name="Chain P."/>
            <person name="Malfatti S."/>
            <person name="Shin M."/>
            <person name="Vergez L."/>
            <person name="Schmutz J."/>
            <person name="Larimer F."/>
            <person name="Land M."/>
            <person name="Hauser L."/>
            <person name="Kyrpides N."/>
            <person name="Kim E."/>
            <person name="Brettar I."/>
            <person name="Rodrigues J."/>
            <person name="Konstantinidis K."/>
            <person name="Klappenbach J."/>
            <person name="Hofle M."/>
            <person name="Tiedje J."/>
            <person name="Richardson P."/>
        </authorList>
    </citation>
    <scope>NUCLEOTIDE SEQUENCE [LARGE SCALE GENOMIC DNA]</scope>
    <source>
        <strain>OS195</strain>
    </source>
</reference>